<name>NUOCD_AERS4</name>
<organism>
    <name type="scientific">Aeromonas salmonicida (strain A449)</name>
    <dbReference type="NCBI Taxonomy" id="382245"/>
    <lineage>
        <taxon>Bacteria</taxon>
        <taxon>Pseudomonadati</taxon>
        <taxon>Pseudomonadota</taxon>
        <taxon>Gammaproteobacteria</taxon>
        <taxon>Aeromonadales</taxon>
        <taxon>Aeromonadaceae</taxon>
        <taxon>Aeromonas</taxon>
    </lineage>
</organism>
<evidence type="ECO:0000255" key="1">
    <source>
        <dbReference type="HAMAP-Rule" id="MF_01359"/>
    </source>
</evidence>
<sequence>MKLTRDFPSNYTMAQWQPSDHQDAQVVGELFSHFGAERFTVQSTRTGVPVIWLARELLLDVVGFLRKLPSPFVMLYDLSATDERLRSHRDGLPQSDFTVFYHFISIDRNADVMLKVPLAESDLHLPTLTGHFPNANWYEREVWDLLGITFDGHPHLTRIMMPKSWQGHPLRKDYPARATEFDPFMLDAAKQDMEQENLLFKPEEWGMARGNENEDYMFLNLGPNHPSAHGAFRLVLQLDGEEIRNCVPDIGYHHRGAEKMGERQSWHSYIPYTDRVEYLGGVMNNLPYVLAVEKLAGIKVPNRVDVIRVMMAELFRIQSHLLFLGTYIQDVGAMTPVFFTFTDRQKIYTIIEAITGARMHPAWFRIGGVAHDLPKGWQRLVQDNLLSWLPKRLMDYEKAAMRNSILRGRTIGVSAYTTEQALAWGTTGAGLRATGLNFDVRKWRPYSGYDQFDFEVPVGSNGDAYDRATVRIEEIRQSLSIIEQCMKNMPEGPFKADHPLTTPPPKDRTLQDIETLITHFLQVSWGPVMPAAESFQMIEATKGINSYYLTSDGSTMSYRTRIRTPSFAHLQQIPSVIKGSMVSDLIVYLGSIDFVMSDVDR</sequence>
<proteinExistence type="inferred from homology"/>
<accession>A4SLP2</accession>
<protein>
    <recommendedName>
        <fullName evidence="1">NADH-quinone oxidoreductase subunit C/D</fullName>
        <ecNumber evidence="1">7.1.1.-</ecNumber>
    </recommendedName>
    <alternativeName>
        <fullName evidence="1">NADH dehydrogenase I subunit C/D</fullName>
    </alternativeName>
    <alternativeName>
        <fullName evidence="1">NDH-1 subunit C/D</fullName>
    </alternativeName>
</protein>
<feature type="chain" id="PRO_0000358612" description="NADH-quinone oxidoreductase subunit C/D">
    <location>
        <begin position="1"/>
        <end position="601"/>
    </location>
</feature>
<feature type="region of interest" description="NADH dehydrogenase I subunit C" evidence="1">
    <location>
        <begin position="1"/>
        <end position="191"/>
    </location>
</feature>
<feature type="region of interest" description="NADH dehydrogenase I subunit D" evidence="1">
    <location>
        <begin position="215"/>
        <end position="601"/>
    </location>
</feature>
<gene>
    <name evidence="1" type="primary">nuoC</name>
    <name evidence="1" type="synonym">nuoCD</name>
    <name evidence="1" type="synonym">nuoD</name>
    <name type="ordered locus">ASA_1734</name>
</gene>
<dbReference type="EC" id="7.1.1.-" evidence="1"/>
<dbReference type="EMBL" id="CP000644">
    <property type="protein sequence ID" value="ABO89814.1"/>
    <property type="molecule type" value="Genomic_DNA"/>
</dbReference>
<dbReference type="SMR" id="A4SLP2"/>
<dbReference type="STRING" id="29491.GCA_000820065_02204"/>
<dbReference type="KEGG" id="asa:ASA_1734"/>
<dbReference type="eggNOG" id="COG0649">
    <property type="taxonomic scope" value="Bacteria"/>
</dbReference>
<dbReference type="eggNOG" id="COG0852">
    <property type="taxonomic scope" value="Bacteria"/>
</dbReference>
<dbReference type="HOGENOM" id="CLU_015134_3_2_6"/>
<dbReference type="Proteomes" id="UP000000225">
    <property type="component" value="Chromosome"/>
</dbReference>
<dbReference type="GO" id="GO:0030964">
    <property type="term" value="C:NADH dehydrogenase complex"/>
    <property type="evidence" value="ECO:0007669"/>
    <property type="project" value="InterPro"/>
</dbReference>
<dbReference type="GO" id="GO:0005886">
    <property type="term" value="C:plasma membrane"/>
    <property type="evidence" value="ECO:0007669"/>
    <property type="project" value="UniProtKB-SubCell"/>
</dbReference>
<dbReference type="GO" id="GO:0051287">
    <property type="term" value="F:NAD binding"/>
    <property type="evidence" value="ECO:0007669"/>
    <property type="project" value="InterPro"/>
</dbReference>
<dbReference type="GO" id="GO:0008137">
    <property type="term" value="F:NADH dehydrogenase (ubiquinone) activity"/>
    <property type="evidence" value="ECO:0007669"/>
    <property type="project" value="InterPro"/>
</dbReference>
<dbReference type="GO" id="GO:0050136">
    <property type="term" value="F:NADH:ubiquinone reductase (non-electrogenic) activity"/>
    <property type="evidence" value="ECO:0007669"/>
    <property type="project" value="UniProtKB-UniRule"/>
</dbReference>
<dbReference type="GO" id="GO:0048038">
    <property type="term" value="F:quinone binding"/>
    <property type="evidence" value="ECO:0007669"/>
    <property type="project" value="UniProtKB-KW"/>
</dbReference>
<dbReference type="FunFam" id="1.10.645.10:FF:000001">
    <property type="entry name" value="NADH-quinone oxidoreductase subunit C/D"/>
    <property type="match status" value="1"/>
</dbReference>
<dbReference type="FunFam" id="3.30.460.80:FF:000001">
    <property type="entry name" value="NADH-quinone oxidoreductase subunit C/D"/>
    <property type="match status" value="1"/>
</dbReference>
<dbReference type="Gene3D" id="1.10.645.10">
    <property type="entry name" value="Cytochrome-c3 Hydrogenase, chain B"/>
    <property type="match status" value="1"/>
</dbReference>
<dbReference type="Gene3D" id="3.30.460.80">
    <property type="entry name" value="NADH:ubiquinone oxidoreductase, 30kDa subunit"/>
    <property type="match status" value="1"/>
</dbReference>
<dbReference type="HAMAP" id="MF_01359">
    <property type="entry name" value="NDH1_NuoCD_1"/>
    <property type="match status" value="1"/>
</dbReference>
<dbReference type="HAMAP" id="MF_01358">
    <property type="entry name" value="NDH1_NuoD"/>
    <property type="match status" value="1"/>
</dbReference>
<dbReference type="InterPro" id="IPR010218">
    <property type="entry name" value="NADH_DH_suC"/>
</dbReference>
<dbReference type="InterPro" id="IPR023062">
    <property type="entry name" value="NADH_DH_suCD"/>
</dbReference>
<dbReference type="InterPro" id="IPR001135">
    <property type="entry name" value="NADH_Q_OxRdtase_suD"/>
</dbReference>
<dbReference type="InterPro" id="IPR037232">
    <property type="entry name" value="NADH_quin_OxRdtase_su_C/D-like"/>
</dbReference>
<dbReference type="InterPro" id="IPR001268">
    <property type="entry name" value="NADH_UbQ_OxRdtase_30kDa_su"/>
</dbReference>
<dbReference type="InterPro" id="IPR014029">
    <property type="entry name" value="NADH_UbQ_OxRdtase_49kDa_CS"/>
</dbReference>
<dbReference type="InterPro" id="IPR022885">
    <property type="entry name" value="NDH1_su_D/H"/>
</dbReference>
<dbReference type="InterPro" id="IPR029014">
    <property type="entry name" value="NiFe-Hase_large"/>
</dbReference>
<dbReference type="NCBIfam" id="TIGR01961">
    <property type="entry name" value="NuoC_fam"/>
    <property type="match status" value="1"/>
</dbReference>
<dbReference type="NCBIfam" id="TIGR01962">
    <property type="entry name" value="NuoD"/>
    <property type="match status" value="1"/>
</dbReference>
<dbReference type="NCBIfam" id="NF004739">
    <property type="entry name" value="PRK06075.1"/>
    <property type="match status" value="1"/>
</dbReference>
<dbReference type="NCBIfam" id="NF008728">
    <property type="entry name" value="PRK11742.1"/>
    <property type="match status" value="1"/>
</dbReference>
<dbReference type="PANTHER" id="PTHR11993:SF45">
    <property type="entry name" value="NADH-QUINONE OXIDOREDUCTASE SUBUNIT C_D"/>
    <property type="match status" value="1"/>
</dbReference>
<dbReference type="PANTHER" id="PTHR11993">
    <property type="entry name" value="NADH-UBIQUINONE OXIDOREDUCTASE 49 KDA SUBUNIT"/>
    <property type="match status" value="1"/>
</dbReference>
<dbReference type="Pfam" id="PF00329">
    <property type="entry name" value="Complex1_30kDa"/>
    <property type="match status" value="1"/>
</dbReference>
<dbReference type="Pfam" id="PF00346">
    <property type="entry name" value="Complex1_49kDa"/>
    <property type="match status" value="1"/>
</dbReference>
<dbReference type="SUPFAM" id="SSF56762">
    <property type="entry name" value="HydB/Nqo4-like"/>
    <property type="match status" value="1"/>
</dbReference>
<dbReference type="SUPFAM" id="SSF143243">
    <property type="entry name" value="Nqo5-like"/>
    <property type="match status" value="1"/>
</dbReference>
<dbReference type="PROSITE" id="PS00535">
    <property type="entry name" value="COMPLEX1_49K"/>
    <property type="match status" value="1"/>
</dbReference>
<keyword id="KW-0997">Cell inner membrane</keyword>
<keyword id="KW-1003">Cell membrane</keyword>
<keyword id="KW-0472">Membrane</keyword>
<keyword id="KW-0511">Multifunctional enzyme</keyword>
<keyword id="KW-0520">NAD</keyword>
<keyword id="KW-0874">Quinone</keyword>
<keyword id="KW-1278">Translocase</keyword>
<keyword id="KW-0813">Transport</keyword>
<keyword id="KW-0830">Ubiquinone</keyword>
<comment type="function">
    <text evidence="1">NDH-1 shuttles electrons from NADH, via FMN and iron-sulfur (Fe-S) centers, to quinones in the respiratory chain. The immediate electron acceptor for the enzyme in this species is believed to be ubiquinone. Couples the redox reaction to proton translocation (for every two electrons transferred, four hydrogen ions are translocated across the cytoplasmic membrane), and thus conserves the redox energy in a proton gradient.</text>
</comment>
<comment type="catalytic activity">
    <reaction evidence="1">
        <text>a quinone + NADH + 5 H(+)(in) = a quinol + NAD(+) + 4 H(+)(out)</text>
        <dbReference type="Rhea" id="RHEA:57888"/>
        <dbReference type="ChEBI" id="CHEBI:15378"/>
        <dbReference type="ChEBI" id="CHEBI:24646"/>
        <dbReference type="ChEBI" id="CHEBI:57540"/>
        <dbReference type="ChEBI" id="CHEBI:57945"/>
        <dbReference type="ChEBI" id="CHEBI:132124"/>
    </reaction>
</comment>
<comment type="subunit">
    <text evidence="1">NDH-1 is composed of 13 different subunits. Subunits NuoB, CD, E, F, and G constitute the peripheral sector of the complex.</text>
</comment>
<comment type="subcellular location">
    <subcellularLocation>
        <location evidence="1">Cell inner membrane</location>
        <topology evidence="1">Peripheral membrane protein</topology>
        <orientation evidence="1">Cytoplasmic side</orientation>
    </subcellularLocation>
</comment>
<comment type="similarity">
    <text evidence="1">In the N-terminal section; belongs to the complex I 30 kDa subunit family.</text>
</comment>
<comment type="similarity">
    <text evidence="1">In the C-terminal section; belongs to the complex I 49 kDa subunit family.</text>
</comment>
<reference key="1">
    <citation type="journal article" date="2008" name="BMC Genomics">
        <title>The genome of Aeromonas salmonicida subsp. salmonicida A449: insights into the evolution of a fish pathogen.</title>
        <authorList>
            <person name="Reith M.E."/>
            <person name="Singh R.K."/>
            <person name="Curtis B."/>
            <person name="Boyd J.M."/>
            <person name="Bouevitch A."/>
            <person name="Kimball J."/>
            <person name="Munholland J."/>
            <person name="Murphy C."/>
            <person name="Sarty D."/>
            <person name="Williams J."/>
            <person name="Nash J.H."/>
            <person name="Johnson S.C."/>
            <person name="Brown L.L."/>
        </authorList>
    </citation>
    <scope>NUCLEOTIDE SEQUENCE [LARGE SCALE GENOMIC DNA]</scope>
    <source>
        <strain>A449</strain>
    </source>
</reference>